<proteinExistence type="inferred from homology"/>
<name>BSHC_BACC2</name>
<keyword id="KW-0175">Coiled coil</keyword>
<keyword id="KW-0436">Ligase</keyword>
<feature type="chain" id="PRO_0000378213" description="Putative cysteine ligase BshC">
    <location>
        <begin position="1"/>
        <end position="538"/>
    </location>
</feature>
<feature type="coiled-coil region" evidence="1">
    <location>
        <begin position="248"/>
        <end position="268"/>
    </location>
</feature>
<dbReference type="EC" id="6.-.-.-" evidence="1"/>
<dbReference type="EMBL" id="CP001186">
    <property type="protein sequence ID" value="ACK98304.1"/>
    <property type="molecule type" value="Genomic_DNA"/>
</dbReference>
<dbReference type="RefSeq" id="WP_000403044.1">
    <property type="nucleotide sequence ID" value="NC_011772.1"/>
</dbReference>
<dbReference type="SMR" id="B7IVF4"/>
<dbReference type="KEGG" id="bcg:BCG9842_B1221"/>
<dbReference type="HOGENOM" id="CLU_022249_1_0_9"/>
<dbReference type="Proteomes" id="UP000006744">
    <property type="component" value="Chromosome"/>
</dbReference>
<dbReference type="GO" id="GO:0016874">
    <property type="term" value="F:ligase activity"/>
    <property type="evidence" value="ECO:0007669"/>
    <property type="project" value="UniProtKB-UniRule"/>
</dbReference>
<dbReference type="HAMAP" id="MF_01867">
    <property type="entry name" value="BshC"/>
    <property type="match status" value="1"/>
</dbReference>
<dbReference type="InterPro" id="IPR011199">
    <property type="entry name" value="Bacillithiol_biosynth_BshC"/>
</dbReference>
<dbReference type="InterPro" id="IPR055399">
    <property type="entry name" value="CC_BshC"/>
</dbReference>
<dbReference type="InterPro" id="IPR055398">
    <property type="entry name" value="Rossmann-like_BshC"/>
</dbReference>
<dbReference type="NCBIfam" id="TIGR03998">
    <property type="entry name" value="thiol_BshC"/>
    <property type="match status" value="1"/>
</dbReference>
<dbReference type="Pfam" id="PF24850">
    <property type="entry name" value="CC_BshC"/>
    <property type="match status" value="1"/>
</dbReference>
<dbReference type="Pfam" id="PF10079">
    <property type="entry name" value="Rossmann-like_BshC"/>
    <property type="match status" value="1"/>
</dbReference>
<dbReference type="PIRSF" id="PIRSF012535">
    <property type="entry name" value="UCP012535"/>
    <property type="match status" value="1"/>
</dbReference>
<protein>
    <recommendedName>
        <fullName evidence="1">Putative cysteine ligase BshC</fullName>
        <ecNumber evidence="1">6.-.-.-</ecNumber>
    </recommendedName>
</protein>
<sequence>MEIKEISVPQQGVVADYMNGKKEIQSCFDYMLTEDAFKQRLHDLREREFFRQDVVAHLLEYNTKLQAGESTLQNVKALGDENTYVVIAGQQAGLLTGPLYTIHKVISILKLAKEKEESLGVKVVPVFWIAGEDHDMDEINHTFLAKNKKMKKTIFYDRNPKKASASESELSVEDCRNWIEEIFKTYPETNFTKDVLKFVDDALEKSNTYVDFFAHLITKIFANSGLILVDSHHPELRKLEIPFFKRIISKYKEVQEGLRNQQEVIKELGYKPIIETKSHAVHIFMEIDNERVLLEEHQGKFVGKDGAHSFSYEELIEEMERNPARFSNNVVTRPLMQEYVFPTLAFIGGPGELAYWSELQQVFHTVGFQMPPVVPRLTITYVERCIATDLFDLQLRESDPFLNDVDKLRENWLSNQIEEPIDNHFEKAKKEIADIHTSLQQFVKKIEPGLSAFAGKNELKINEQIELLERMLKRNVEKKYEVQLNKFRRIQFALRPLGAPQERVWNVCYYLNQFGLDFVDRVMENPFSWDGKHHVIKL</sequence>
<organism>
    <name type="scientific">Bacillus cereus (strain G9842)</name>
    <dbReference type="NCBI Taxonomy" id="405531"/>
    <lineage>
        <taxon>Bacteria</taxon>
        <taxon>Bacillati</taxon>
        <taxon>Bacillota</taxon>
        <taxon>Bacilli</taxon>
        <taxon>Bacillales</taxon>
        <taxon>Bacillaceae</taxon>
        <taxon>Bacillus</taxon>
        <taxon>Bacillus cereus group</taxon>
    </lineage>
</organism>
<comment type="function">
    <text evidence="1">Involved in bacillithiol (BSH) biosynthesis. May catalyze the last step of the pathway, the addition of cysteine to glucosamine malate (GlcN-Mal) to generate BSH.</text>
</comment>
<comment type="similarity">
    <text evidence="1">Belongs to the BshC family.</text>
</comment>
<reference key="1">
    <citation type="submission" date="2008-10" db="EMBL/GenBank/DDBJ databases">
        <title>Genome sequence of Bacillus cereus G9842.</title>
        <authorList>
            <person name="Dodson R.J."/>
            <person name="Durkin A.S."/>
            <person name="Rosovitz M.J."/>
            <person name="Rasko D.A."/>
            <person name="Hoffmaster A."/>
            <person name="Ravel J."/>
            <person name="Sutton G."/>
        </authorList>
    </citation>
    <scope>NUCLEOTIDE SEQUENCE [LARGE SCALE GENOMIC DNA]</scope>
    <source>
        <strain>G9842</strain>
    </source>
</reference>
<accession>B7IVF4</accession>
<evidence type="ECO:0000255" key="1">
    <source>
        <dbReference type="HAMAP-Rule" id="MF_01867"/>
    </source>
</evidence>
<gene>
    <name evidence="1" type="primary">bshC</name>
    <name type="ordered locus">BCG9842_B1221</name>
</gene>